<feature type="chain" id="PRO_0000157741" description="Probable GTP-binding protein EngB">
    <location>
        <begin position="1"/>
        <end position="228"/>
    </location>
</feature>
<feature type="domain" description="EngB-type G" evidence="1">
    <location>
        <begin position="48"/>
        <end position="222"/>
    </location>
</feature>
<feature type="binding site" evidence="1">
    <location>
        <begin position="56"/>
        <end position="63"/>
    </location>
    <ligand>
        <name>GTP</name>
        <dbReference type="ChEBI" id="CHEBI:37565"/>
    </ligand>
</feature>
<feature type="binding site" evidence="1">
    <location>
        <position position="63"/>
    </location>
    <ligand>
        <name>Mg(2+)</name>
        <dbReference type="ChEBI" id="CHEBI:18420"/>
    </ligand>
</feature>
<feature type="binding site" evidence="1">
    <location>
        <begin position="83"/>
        <end position="87"/>
    </location>
    <ligand>
        <name>GTP</name>
        <dbReference type="ChEBI" id="CHEBI:37565"/>
    </ligand>
</feature>
<feature type="binding site" evidence="1">
    <location>
        <position position="85"/>
    </location>
    <ligand>
        <name>Mg(2+)</name>
        <dbReference type="ChEBI" id="CHEBI:18420"/>
    </ligand>
</feature>
<feature type="binding site" evidence="1">
    <location>
        <begin position="101"/>
        <end position="104"/>
    </location>
    <ligand>
        <name>GTP</name>
        <dbReference type="ChEBI" id="CHEBI:37565"/>
    </ligand>
</feature>
<feature type="binding site" evidence="1">
    <location>
        <begin position="168"/>
        <end position="171"/>
    </location>
    <ligand>
        <name>GTP</name>
        <dbReference type="ChEBI" id="CHEBI:37565"/>
    </ligand>
</feature>
<feature type="binding site" evidence="1">
    <location>
        <begin position="201"/>
        <end position="203"/>
    </location>
    <ligand>
        <name>GTP</name>
        <dbReference type="ChEBI" id="CHEBI:37565"/>
    </ligand>
</feature>
<sequence>MYLVDTIDYQKICCIIKTFEDNILFQKNYHSTWFLKSIANIQKEKYNYGLEVAFVGYSNSGKSSIINALTNQKKLAKISRTPGRTRLINIFSVTSEIRLVDFPGYGYAQVSRSISKKWKEMIFQYLNIQKCLQGLVIITDIRCPIKEIDELVINLAVSLNIPILLLLNKMDKVTRSIQKSKLFSTREKMLNFSNNINVELFSSFKKIGIHKLQFVLNNWFSSDKKLCQ</sequence>
<evidence type="ECO:0000255" key="1">
    <source>
        <dbReference type="HAMAP-Rule" id="MF_00321"/>
    </source>
</evidence>
<evidence type="ECO:0000305" key="2"/>
<gene>
    <name evidence="1" type="primary">engB</name>
    <name type="ordered locus">bbp_383</name>
</gene>
<accession>Q89AD0</accession>
<proteinExistence type="inferred from homology"/>
<keyword id="KW-0131">Cell cycle</keyword>
<keyword id="KW-0132">Cell division</keyword>
<keyword id="KW-0342">GTP-binding</keyword>
<keyword id="KW-0460">Magnesium</keyword>
<keyword id="KW-0479">Metal-binding</keyword>
<keyword id="KW-0547">Nucleotide-binding</keyword>
<keyword id="KW-1185">Reference proteome</keyword>
<keyword id="KW-0717">Septation</keyword>
<comment type="function">
    <text evidence="1">Necessary for normal cell division and for the maintenance of normal septation.</text>
</comment>
<comment type="cofactor">
    <cofactor evidence="1">
        <name>Mg(2+)</name>
        <dbReference type="ChEBI" id="CHEBI:18420"/>
    </cofactor>
</comment>
<comment type="similarity">
    <text evidence="1">Belongs to the TRAFAC class TrmE-Era-EngA-EngB-Septin-like GTPase superfamily. EngB GTPase family.</text>
</comment>
<comment type="sequence caution" evidence="2">
    <conflict type="erroneous initiation">
        <sequence resource="EMBL-CDS" id="AAO27095"/>
    </conflict>
</comment>
<organism>
    <name type="scientific">Buchnera aphidicola subsp. Baizongia pistaciae (strain Bp)</name>
    <dbReference type="NCBI Taxonomy" id="224915"/>
    <lineage>
        <taxon>Bacteria</taxon>
        <taxon>Pseudomonadati</taxon>
        <taxon>Pseudomonadota</taxon>
        <taxon>Gammaproteobacteria</taxon>
        <taxon>Enterobacterales</taxon>
        <taxon>Erwiniaceae</taxon>
        <taxon>Buchnera</taxon>
    </lineage>
</organism>
<reference key="1">
    <citation type="journal article" date="2003" name="Proc. Natl. Acad. Sci. U.S.A.">
        <title>Reductive genome evolution in Buchnera aphidicola.</title>
        <authorList>
            <person name="van Ham R.C.H.J."/>
            <person name="Kamerbeek J."/>
            <person name="Palacios C."/>
            <person name="Rausell C."/>
            <person name="Abascal F."/>
            <person name="Bastolla U."/>
            <person name="Fernandez J.M."/>
            <person name="Jimenez L."/>
            <person name="Postigo M."/>
            <person name="Silva F.J."/>
            <person name="Tamames J."/>
            <person name="Viguera E."/>
            <person name="Latorre A."/>
            <person name="Valencia A."/>
            <person name="Moran F."/>
            <person name="Moya A."/>
        </authorList>
    </citation>
    <scope>NUCLEOTIDE SEQUENCE [LARGE SCALE GENOMIC DNA]</scope>
    <source>
        <strain>Bp</strain>
    </source>
</reference>
<protein>
    <recommendedName>
        <fullName evidence="1">Probable GTP-binding protein EngB</fullName>
    </recommendedName>
</protein>
<dbReference type="EMBL" id="AE016826">
    <property type="protein sequence ID" value="AAO27095.1"/>
    <property type="status" value="ALT_INIT"/>
    <property type="molecule type" value="Genomic_DNA"/>
</dbReference>
<dbReference type="SMR" id="Q89AD0"/>
<dbReference type="STRING" id="224915.bbp_383"/>
<dbReference type="KEGG" id="bab:bbp_383"/>
<dbReference type="eggNOG" id="COG0218">
    <property type="taxonomic scope" value="Bacteria"/>
</dbReference>
<dbReference type="HOGENOM" id="CLU_033732_1_0_6"/>
<dbReference type="OrthoDB" id="9804921at2"/>
<dbReference type="Proteomes" id="UP000000601">
    <property type="component" value="Chromosome"/>
</dbReference>
<dbReference type="GO" id="GO:0005829">
    <property type="term" value="C:cytosol"/>
    <property type="evidence" value="ECO:0007669"/>
    <property type="project" value="TreeGrafter"/>
</dbReference>
<dbReference type="GO" id="GO:0005525">
    <property type="term" value="F:GTP binding"/>
    <property type="evidence" value="ECO:0007669"/>
    <property type="project" value="UniProtKB-UniRule"/>
</dbReference>
<dbReference type="GO" id="GO:0046872">
    <property type="term" value="F:metal ion binding"/>
    <property type="evidence" value="ECO:0007669"/>
    <property type="project" value="UniProtKB-KW"/>
</dbReference>
<dbReference type="GO" id="GO:0000917">
    <property type="term" value="P:division septum assembly"/>
    <property type="evidence" value="ECO:0007669"/>
    <property type="project" value="UniProtKB-KW"/>
</dbReference>
<dbReference type="CDD" id="cd01876">
    <property type="entry name" value="YihA_EngB"/>
    <property type="match status" value="1"/>
</dbReference>
<dbReference type="Gene3D" id="3.40.50.300">
    <property type="entry name" value="P-loop containing nucleotide triphosphate hydrolases"/>
    <property type="match status" value="1"/>
</dbReference>
<dbReference type="HAMAP" id="MF_00321">
    <property type="entry name" value="GTPase_EngB"/>
    <property type="match status" value="1"/>
</dbReference>
<dbReference type="InterPro" id="IPR030393">
    <property type="entry name" value="G_ENGB_dom"/>
</dbReference>
<dbReference type="InterPro" id="IPR006073">
    <property type="entry name" value="GTP-bd"/>
</dbReference>
<dbReference type="InterPro" id="IPR019987">
    <property type="entry name" value="GTP-bd_ribosome_bio_YsxC"/>
</dbReference>
<dbReference type="InterPro" id="IPR027417">
    <property type="entry name" value="P-loop_NTPase"/>
</dbReference>
<dbReference type="NCBIfam" id="TIGR03598">
    <property type="entry name" value="GTPase_YsxC"/>
    <property type="match status" value="1"/>
</dbReference>
<dbReference type="PANTHER" id="PTHR11649:SF13">
    <property type="entry name" value="ENGB-TYPE G DOMAIN-CONTAINING PROTEIN"/>
    <property type="match status" value="1"/>
</dbReference>
<dbReference type="PANTHER" id="PTHR11649">
    <property type="entry name" value="MSS1/TRME-RELATED GTP-BINDING PROTEIN"/>
    <property type="match status" value="1"/>
</dbReference>
<dbReference type="Pfam" id="PF01926">
    <property type="entry name" value="MMR_HSR1"/>
    <property type="match status" value="1"/>
</dbReference>
<dbReference type="SUPFAM" id="SSF52540">
    <property type="entry name" value="P-loop containing nucleoside triphosphate hydrolases"/>
    <property type="match status" value="1"/>
</dbReference>
<dbReference type="PROSITE" id="PS51706">
    <property type="entry name" value="G_ENGB"/>
    <property type="match status" value="1"/>
</dbReference>
<name>ENGB_BUCBP</name>